<keyword id="KW-0325">Glycoprotein</keyword>
<keyword id="KW-0378">Hydrolase</keyword>
<keyword id="KW-0442">Lipid degradation</keyword>
<keyword id="KW-0443">Lipid metabolism</keyword>
<keyword id="KW-1185">Reference proteome</keyword>
<keyword id="KW-0964">Secreted</keyword>
<keyword id="KW-0732">Signal</keyword>
<sequence length="349" mass="38858">MKIQILLFALVLIFVEANAATQGKNTTIPALIVFGDSIMDTGNNNNLPTLLKCNFPPYGKDYPGGFATGRFSDGRVPSDLIAEKLGLAKTLPAYMNPYLKPEDLLKGVTFASGGTGYDPLTAKIMSVISVWDQLINFKEYISKIKRHFGEEKAKDILEHSFFLVVSSSNDLAHTYLAQTHRYDRTSYANFLADSAVHFVRELHKLGARKIGVFSAVPVGCVPLQRTVFGGFFTRGCNQPLNNMAKQFNARLSPALDSLDKELDGVILYINVYDTLFDMIQHPKKYGFEVADRGCCGKGLLAISYLCNSLNPFTCSNSSAYIFWDSYHPSERAYQVIVDNLLDKYLSKVY</sequence>
<dbReference type="EC" id="3.1.1.-"/>
<dbReference type="EMBL" id="AC027036">
    <property type="protein sequence ID" value="AAK62791.1"/>
    <property type="molecule type" value="Genomic_DNA"/>
</dbReference>
<dbReference type="EMBL" id="CP002684">
    <property type="protein sequence ID" value="AEE33568.2"/>
    <property type="molecule type" value="Genomic_DNA"/>
</dbReference>
<dbReference type="RefSeq" id="NP_564738.3">
    <property type="nucleotide sequence ID" value="NM_104633.3"/>
</dbReference>
<dbReference type="RefSeq" id="NP_564741.3">
    <property type="nucleotide sequence ID" value="NM_104641.4"/>
</dbReference>
<dbReference type="RefSeq" id="NP_683444.2">
    <property type="nucleotide sequence ID" value="NM_148603.3"/>
</dbReference>
<dbReference type="SMR" id="F4IBF0"/>
<dbReference type="FunCoup" id="F4IBF0">
    <property type="interactions" value="96"/>
</dbReference>
<dbReference type="GlyGen" id="F4IBF0">
    <property type="glycosylation" value="2 sites"/>
</dbReference>
<dbReference type="DNASU" id="842238"/>
<dbReference type="EnsemblPlants" id="AT1G58725.1">
    <property type="protein sequence ID" value="AT1G58725.1"/>
    <property type="gene ID" value="AT1G58725"/>
</dbReference>
<dbReference type="EnsemblPlants" id="AT1G59030.1">
    <property type="protein sequence ID" value="AT1G59030.1"/>
    <property type="gene ID" value="AT1G59030"/>
</dbReference>
<dbReference type="EnsemblPlants" id="AT1G59406.1">
    <property type="protein sequence ID" value="AT1G59406.1"/>
    <property type="gene ID" value="AT1G59406"/>
</dbReference>
<dbReference type="GeneID" id="842230"/>
<dbReference type="Gramene" id="AT1G58725.1">
    <property type="protein sequence ID" value="AT1G58725.1"/>
    <property type="gene ID" value="AT1G58725"/>
</dbReference>
<dbReference type="Gramene" id="AT1G59030.1">
    <property type="protein sequence ID" value="AT1G59030.1"/>
    <property type="gene ID" value="AT1G59030"/>
</dbReference>
<dbReference type="Gramene" id="AT1G59406.1">
    <property type="protein sequence ID" value="AT1G59406.1"/>
    <property type="gene ID" value="AT1G59406"/>
</dbReference>
<dbReference type="KEGG" id="ath:AT1G58725"/>
<dbReference type="KEGG" id="ath:AT1G59030"/>
<dbReference type="KEGG" id="ath:AT1G59406"/>
<dbReference type="Araport" id="AT1G59030"/>
<dbReference type="TAIR" id="AT1G59030"/>
<dbReference type="HOGENOM" id="CLU_015101_0_1_1"/>
<dbReference type="InParanoid" id="F4IBF0"/>
<dbReference type="OMA" id="RSCEDQA"/>
<dbReference type="PhylomeDB" id="F4IBF0"/>
<dbReference type="PRO" id="PR:F4IBF0"/>
<dbReference type="Proteomes" id="UP000006548">
    <property type="component" value="Chromosome 1"/>
</dbReference>
<dbReference type="ExpressionAtlas" id="F4IBF0">
    <property type="expression patterns" value="baseline"/>
</dbReference>
<dbReference type="GO" id="GO:0005576">
    <property type="term" value="C:extracellular region"/>
    <property type="evidence" value="ECO:0007669"/>
    <property type="project" value="UniProtKB-SubCell"/>
</dbReference>
<dbReference type="GO" id="GO:0016298">
    <property type="term" value="F:lipase activity"/>
    <property type="evidence" value="ECO:0007669"/>
    <property type="project" value="InterPro"/>
</dbReference>
<dbReference type="GO" id="GO:0016042">
    <property type="term" value="P:lipid catabolic process"/>
    <property type="evidence" value="ECO:0007669"/>
    <property type="project" value="UniProtKB-KW"/>
</dbReference>
<dbReference type="CDD" id="cd01837">
    <property type="entry name" value="SGNH_plant_lipase_like"/>
    <property type="match status" value="1"/>
</dbReference>
<dbReference type="FunFam" id="3.40.50.1110:FF:000003">
    <property type="entry name" value="GDSL esterase/lipase APG"/>
    <property type="match status" value="1"/>
</dbReference>
<dbReference type="Gene3D" id="3.40.50.1110">
    <property type="entry name" value="SGNH hydrolase"/>
    <property type="match status" value="1"/>
</dbReference>
<dbReference type="InterPro" id="IPR001087">
    <property type="entry name" value="GDSL"/>
</dbReference>
<dbReference type="InterPro" id="IPR050592">
    <property type="entry name" value="GDSL_lipolytic_enzyme"/>
</dbReference>
<dbReference type="InterPro" id="IPR008265">
    <property type="entry name" value="Lipase_GDSL_AS"/>
</dbReference>
<dbReference type="InterPro" id="IPR036514">
    <property type="entry name" value="SGNH_hydro_sf"/>
</dbReference>
<dbReference type="InterPro" id="IPR035669">
    <property type="entry name" value="SGNH_plant_lipase-like"/>
</dbReference>
<dbReference type="PANTHER" id="PTHR45642:SF65">
    <property type="entry name" value="BNAA02G25900D PROTEIN"/>
    <property type="match status" value="1"/>
</dbReference>
<dbReference type="PANTHER" id="PTHR45642">
    <property type="entry name" value="GDSL ESTERASE/LIPASE EXL3"/>
    <property type="match status" value="1"/>
</dbReference>
<dbReference type="Pfam" id="PF00657">
    <property type="entry name" value="Lipase_GDSL"/>
    <property type="match status" value="1"/>
</dbReference>
<dbReference type="SUPFAM" id="SSF52266">
    <property type="entry name" value="SGNH hydrolase"/>
    <property type="match status" value="1"/>
</dbReference>
<dbReference type="PROSITE" id="PS01098">
    <property type="entry name" value="LIPASE_GDSL_SER"/>
    <property type="match status" value="1"/>
</dbReference>
<comment type="subcellular location">
    <subcellularLocation>
        <location evidence="3">Secreted</location>
    </subcellularLocation>
</comment>
<comment type="similarity">
    <text evidence="3">Belongs to the 'GDSL' lipolytic enzyme family.</text>
</comment>
<reference key="1">
    <citation type="journal article" date="2000" name="Nature">
        <title>Sequence and analysis of chromosome 1 of the plant Arabidopsis thaliana.</title>
        <authorList>
            <person name="Theologis A."/>
            <person name="Ecker J.R."/>
            <person name="Palm C.J."/>
            <person name="Federspiel N.A."/>
            <person name="Kaul S."/>
            <person name="White O."/>
            <person name="Alonso J."/>
            <person name="Altafi H."/>
            <person name="Araujo R."/>
            <person name="Bowman C.L."/>
            <person name="Brooks S.Y."/>
            <person name="Buehler E."/>
            <person name="Chan A."/>
            <person name="Chao Q."/>
            <person name="Chen H."/>
            <person name="Cheuk R.F."/>
            <person name="Chin C.W."/>
            <person name="Chung M.K."/>
            <person name="Conn L."/>
            <person name="Conway A.B."/>
            <person name="Conway A.R."/>
            <person name="Creasy T.H."/>
            <person name="Dewar K."/>
            <person name="Dunn P."/>
            <person name="Etgu P."/>
            <person name="Feldblyum T.V."/>
            <person name="Feng J.-D."/>
            <person name="Fong B."/>
            <person name="Fujii C.Y."/>
            <person name="Gill J.E."/>
            <person name="Goldsmith A.D."/>
            <person name="Haas B."/>
            <person name="Hansen N.F."/>
            <person name="Hughes B."/>
            <person name="Huizar L."/>
            <person name="Hunter J.L."/>
            <person name="Jenkins J."/>
            <person name="Johnson-Hopson C."/>
            <person name="Khan S."/>
            <person name="Khaykin E."/>
            <person name="Kim C.J."/>
            <person name="Koo H.L."/>
            <person name="Kremenetskaia I."/>
            <person name="Kurtz D.B."/>
            <person name="Kwan A."/>
            <person name="Lam B."/>
            <person name="Langin-Hooper S."/>
            <person name="Lee A."/>
            <person name="Lee J.M."/>
            <person name="Lenz C.A."/>
            <person name="Li J.H."/>
            <person name="Li Y.-P."/>
            <person name="Lin X."/>
            <person name="Liu S.X."/>
            <person name="Liu Z.A."/>
            <person name="Luros J.S."/>
            <person name="Maiti R."/>
            <person name="Marziali A."/>
            <person name="Militscher J."/>
            <person name="Miranda M."/>
            <person name="Nguyen M."/>
            <person name="Nierman W.C."/>
            <person name="Osborne B.I."/>
            <person name="Pai G."/>
            <person name="Peterson J."/>
            <person name="Pham P.K."/>
            <person name="Rizzo M."/>
            <person name="Rooney T."/>
            <person name="Rowley D."/>
            <person name="Sakano H."/>
            <person name="Salzberg S.L."/>
            <person name="Schwartz J.R."/>
            <person name="Shinn P."/>
            <person name="Southwick A.M."/>
            <person name="Sun H."/>
            <person name="Tallon L.J."/>
            <person name="Tambunga G."/>
            <person name="Toriumi M.J."/>
            <person name="Town C.D."/>
            <person name="Utterback T."/>
            <person name="Van Aken S."/>
            <person name="Vaysberg M."/>
            <person name="Vysotskaia V.S."/>
            <person name="Walker M."/>
            <person name="Wu D."/>
            <person name="Yu G."/>
            <person name="Fraser C.M."/>
            <person name="Venter J.C."/>
            <person name="Davis R.W."/>
        </authorList>
    </citation>
    <scope>NUCLEOTIDE SEQUENCE [LARGE SCALE GENOMIC DNA]</scope>
    <source>
        <strain>cv. Columbia</strain>
    </source>
</reference>
<reference key="2">
    <citation type="journal article" date="2017" name="Plant J.">
        <title>Araport11: a complete reannotation of the Arabidopsis thaliana reference genome.</title>
        <authorList>
            <person name="Cheng C.Y."/>
            <person name="Krishnakumar V."/>
            <person name="Chan A.P."/>
            <person name="Thibaud-Nissen F."/>
            <person name="Schobel S."/>
            <person name="Town C.D."/>
        </authorList>
    </citation>
    <scope>GENOME REANNOTATION</scope>
    <source>
        <strain>cv. Columbia</strain>
    </source>
</reference>
<reference key="3">
    <citation type="journal article" date="2004" name="Prog. Lipid Res.">
        <title>GDSL family of serine esterases/lipases.</title>
        <authorList>
            <person name="Akoh C.C."/>
            <person name="Lee G.-C."/>
            <person name="Liaw Y.-C."/>
            <person name="Huang T.-H."/>
            <person name="Shaw J.-F."/>
        </authorList>
    </citation>
    <scope>REVIEW</scope>
</reference>
<reference key="4">
    <citation type="journal article" date="2008" name="Pak. J. Biol. Sci.">
        <title>Sequence analysis of GDSL lipase gene family in Arabidopsis thaliana.</title>
        <authorList>
            <person name="Ling H."/>
        </authorList>
    </citation>
    <scope>GENE FAMILY</scope>
</reference>
<gene>
    <name type="ordered locus">At1g59030</name>
    <name type="ORF">T4M14.19</name>
</gene>
<protein>
    <recommendedName>
        <fullName>GDSL esterase/lipase At1g59030</fullName>
        <ecNumber>3.1.1.-</ecNumber>
    </recommendedName>
    <alternativeName>
        <fullName>Extracellular lipase At1g59030</fullName>
    </alternativeName>
</protein>
<evidence type="ECO:0000250" key="1"/>
<evidence type="ECO:0000255" key="2"/>
<evidence type="ECO:0000305" key="3"/>
<organism>
    <name type="scientific">Arabidopsis thaliana</name>
    <name type="common">Mouse-ear cress</name>
    <dbReference type="NCBI Taxonomy" id="3702"/>
    <lineage>
        <taxon>Eukaryota</taxon>
        <taxon>Viridiplantae</taxon>
        <taxon>Streptophyta</taxon>
        <taxon>Embryophyta</taxon>
        <taxon>Tracheophyta</taxon>
        <taxon>Spermatophyta</taxon>
        <taxon>Magnoliopsida</taxon>
        <taxon>eudicotyledons</taxon>
        <taxon>Gunneridae</taxon>
        <taxon>Pentapetalae</taxon>
        <taxon>rosids</taxon>
        <taxon>malvids</taxon>
        <taxon>Brassicales</taxon>
        <taxon>Brassicaceae</taxon>
        <taxon>Camelineae</taxon>
        <taxon>Arabidopsis</taxon>
    </lineage>
</organism>
<feature type="signal peptide" evidence="2">
    <location>
        <begin position="1"/>
        <end position="19"/>
    </location>
</feature>
<feature type="chain" id="PRO_0000367368" description="GDSL esterase/lipase At1g59030">
    <location>
        <begin position="20"/>
        <end position="349"/>
    </location>
</feature>
<feature type="active site" description="Nucleophile" evidence="1">
    <location>
        <position position="37"/>
    </location>
</feature>
<feature type="active site" evidence="1">
    <location>
        <position position="324"/>
    </location>
</feature>
<feature type="active site" evidence="1">
    <location>
        <position position="327"/>
    </location>
</feature>
<feature type="glycosylation site" description="N-linked (GlcNAc...) asparagine" evidence="2">
    <location>
        <position position="25"/>
    </location>
</feature>
<feature type="glycosylation site" description="N-linked (GlcNAc...) asparagine" evidence="2">
    <location>
        <position position="316"/>
    </location>
</feature>
<proteinExistence type="inferred from homology"/>
<name>GDL26_ARATH</name>
<accession>F4IBF0</accession>
<accession>B3H492</accession>
<accession>Q93W97</accession>